<comment type="catalytic activity">
    <reaction evidence="1">
        <text>tRNA(His) + L-histidine + ATP = L-histidyl-tRNA(His) + AMP + diphosphate + H(+)</text>
        <dbReference type="Rhea" id="RHEA:17313"/>
        <dbReference type="Rhea" id="RHEA-COMP:9665"/>
        <dbReference type="Rhea" id="RHEA-COMP:9689"/>
        <dbReference type="ChEBI" id="CHEBI:15378"/>
        <dbReference type="ChEBI" id="CHEBI:30616"/>
        <dbReference type="ChEBI" id="CHEBI:33019"/>
        <dbReference type="ChEBI" id="CHEBI:57595"/>
        <dbReference type="ChEBI" id="CHEBI:78442"/>
        <dbReference type="ChEBI" id="CHEBI:78527"/>
        <dbReference type="ChEBI" id="CHEBI:456215"/>
        <dbReference type="EC" id="6.1.1.21"/>
    </reaction>
</comment>
<comment type="subunit">
    <text evidence="1">Homodimer.</text>
</comment>
<comment type="subcellular location">
    <subcellularLocation>
        <location evidence="1">Cytoplasm</location>
    </subcellularLocation>
</comment>
<comment type="similarity">
    <text evidence="1">Belongs to the class-II aminoacyl-tRNA synthetase family.</text>
</comment>
<protein>
    <recommendedName>
        <fullName evidence="1">Histidine--tRNA ligase</fullName>
        <ecNumber evidence="1">6.1.1.21</ecNumber>
    </recommendedName>
    <alternativeName>
        <fullName evidence="1">Histidyl-tRNA synthetase</fullName>
        <shortName evidence="1">HisRS</shortName>
    </alternativeName>
</protein>
<dbReference type="EC" id="6.1.1.21" evidence="1"/>
<dbReference type="EMBL" id="CP001063">
    <property type="protein sequence ID" value="ACD09688.1"/>
    <property type="molecule type" value="Genomic_DNA"/>
</dbReference>
<dbReference type="RefSeq" id="WP_001107159.1">
    <property type="nucleotide sequence ID" value="NC_010658.1"/>
</dbReference>
<dbReference type="SMR" id="B2TXT9"/>
<dbReference type="STRING" id="344609.SbBS512_E2889"/>
<dbReference type="KEGG" id="sbc:SbBS512_E2889"/>
<dbReference type="HOGENOM" id="CLU_025113_1_1_6"/>
<dbReference type="Proteomes" id="UP000001030">
    <property type="component" value="Chromosome"/>
</dbReference>
<dbReference type="GO" id="GO:0005737">
    <property type="term" value="C:cytoplasm"/>
    <property type="evidence" value="ECO:0007669"/>
    <property type="project" value="UniProtKB-SubCell"/>
</dbReference>
<dbReference type="GO" id="GO:0005524">
    <property type="term" value="F:ATP binding"/>
    <property type="evidence" value="ECO:0007669"/>
    <property type="project" value="UniProtKB-UniRule"/>
</dbReference>
<dbReference type="GO" id="GO:0004821">
    <property type="term" value="F:histidine-tRNA ligase activity"/>
    <property type="evidence" value="ECO:0007669"/>
    <property type="project" value="UniProtKB-UniRule"/>
</dbReference>
<dbReference type="GO" id="GO:0006427">
    <property type="term" value="P:histidyl-tRNA aminoacylation"/>
    <property type="evidence" value="ECO:0007669"/>
    <property type="project" value="UniProtKB-UniRule"/>
</dbReference>
<dbReference type="CDD" id="cd00773">
    <property type="entry name" value="HisRS-like_core"/>
    <property type="match status" value="1"/>
</dbReference>
<dbReference type="CDD" id="cd00859">
    <property type="entry name" value="HisRS_anticodon"/>
    <property type="match status" value="1"/>
</dbReference>
<dbReference type="FunFam" id="3.30.930.10:FF:000005">
    <property type="entry name" value="Histidine--tRNA ligase"/>
    <property type="match status" value="1"/>
</dbReference>
<dbReference type="FunFam" id="3.40.50.800:FF:000007">
    <property type="entry name" value="Histidine--tRNA ligase"/>
    <property type="match status" value="1"/>
</dbReference>
<dbReference type="Gene3D" id="3.40.50.800">
    <property type="entry name" value="Anticodon-binding domain"/>
    <property type="match status" value="1"/>
</dbReference>
<dbReference type="Gene3D" id="3.30.930.10">
    <property type="entry name" value="Bira Bifunctional Protein, Domain 2"/>
    <property type="match status" value="1"/>
</dbReference>
<dbReference type="HAMAP" id="MF_00127">
    <property type="entry name" value="His_tRNA_synth"/>
    <property type="match status" value="1"/>
</dbReference>
<dbReference type="InterPro" id="IPR006195">
    <property type="entry name" value="aa-tRNA-synth_II"/>
</dbReference>
<dbReference type="InterPro" id="IPR045864">
    <property type="entry name" value="aa-tRNA-synth_II/BPL/LPL"/>
</dbReference>
<dbReference type="InterPro" id="IPR004154">
    <property type="entry name" value="Anticodon-bd"/>
</dbReference>
<dbReference type="InterPro" id="IPR036621">
    <property type="entry name" value="Anticodon-bd_dom_sf"/>
</dbReference>
<dbReference type="InterPro" id="IPR015807">
    <property type="entry name" value="His-tRNA-ligase"/>
</dbReference>
<dbReference type="InterPro" id="IPR041715">
    <property type="entry name" value="HisRS-like_core"/>
</dbReference>
<dbReference type="InterPro" id="IPR004516">
    <property type="entry name" value="HisRS/HisZ"/>
</dbReference>
<dbReference type="InterPro" id="IPR033656">
    <property type="entry name" value="HisRS_anticodon"/>
</dbReference>
<dbReference type="NCBIfam" id="TIGR00442">
    <property type="entry name" value="hisS"/>
    <property type="match status" value="1"/>
</dbReference>
<dbReference type="PANTHER" id="PTHR43707:SF1">
    <property type="entry name" value="HISTIDINE--TRNA LIGASE, MITOCHONDRIAL-RELATED"/>
    <property type="match status" value="1"/>
</dbReference>
<dbReference type="PANTHER" id="PTHR43707">
    <property type="entry name" value="HISTIDYL-TRNA SYNTHETASE"/>
    <property type="match status" value="1"/>
</dbReference>
<dbReference type="Pfam" id="PF03129">
    <property type="entry name" value="HGTP_anticodon"/>
    <property type="match status" value="1"/>
</dbReference>
<dbReference type="Pfam" id="PF13393">
    <property type="entry name" value="tRNA-synt_His"/>
    <property type="match status" value="1"/>
</dbReference>
<dbReference type="PIRSF" id="PIRSF001549">
    <property type="entry name" value="His-tRNA_synth"/>
    <property type="match status" value="1"/>
</dbReference>
<dbReference type="SUPFAM" id="SSF52954">
    <property type="entry name" value="Class II aaRS ABD-related"/>
    <property type="match status" value="1"/>
</dbReference>
<dbReference type="SUPFAM" id="SSF55681">
    <property type="entry name" value="Class II aaRS and biotin synthetases"/>
    <property type="match status" value="1"/>
</dbReference>
<dbReference type="PROSITE" id="PS50862">
    <property type="entry name" value="AA_TRNA_LIGASE_II"/>
    <property type="match status" value="1"/>
</dbReference>
<proteinExistence type="inferred from homology"/>
<gene>
    <name evidence="1" type="primary">hisS</name>
    <name type="ordered locus">SbBS512_E2889</name>
</gene>
<name>SYH_SHIB3</name>
<sequence length="424" mass="47105">MAKNIQAIRGMNDYLPGETAIWQRIEGTLKNVLGSYGYSEIRLPIVEQTPLFKRAIGEVTDVVEKEMYTFEDRNGDSLTLRPEGTAGCVRAGIEHGLLYNQEQRLWYIGPMFRHERPQKGRYRQFHQLGCEVFGLQGPDIDAELIMLTARWWRALGISEHVTLELNSIGSLEARANYRDALVAFLEQHKEKLDEDCKRRMYTNPLRVLDSKNPEVQALLNDAPALGDYLDEESREHFAGLCKLLESAGIAYTVNQRLVRGLDYYNRTVFEWVTNSLGSQGTVCAGGRYDGLVEQLGGRATPAVGFAMGLERLVLLVQAVNPEFKADPIVDIYLVASGADTQSAAMALAERLRDELQGVKLMTNHGGGNFKKQFARADKWGARVAVVLGESEVTNGTAVVKDLRSGEQTAVAQDSVAAHLRTLLG</sequence>
<evidence type="ECO:0000255" key="1">
    <source>
        <dbReference type="HAMAP-Rule" id="MF_00127"/>
    </source>
</evidence>
<keyword id="KW-0030">Aminoacyl-tRNA synthetase</keyword>
<keyword id="KW-0067">ATP-binding</keyword>
<keyword id="KW-0963">Cytoplasm</keyword>
<keyword id="KW-0436">Ligase</keyword>
<keyword id="KW-0547">Nucleotide-binding</keyword>
<keyword id="KW-0648">Protein biosynthesis</keyword>
<keyword id="KW-1185">Reference proteome</keyword>
<feature type="chain" id="PRO_1000095593" description="Histidine--tRNA ligase">
    <location>
        <begin position="1"/>
        <end position="424"/>
    </location>
</feature>
<organism>
    <name type="scientific">Shigella boydii serotype 18 (strain CDC 3083-94 / BS512)</name>
    <dbReference type="NCBI Taxonomy" id="344609"/>
    <lineage>
        <taxon>Bacteria</taxon>
        <taxon>Pseudomonadati</taxon>
        <taxon>Pseudomonadota</taxon>
        <taxon>Gammaproteobacteria</taxon>
        <taxon>Enterobacterales</taxon>
        <taxon>Enterobacteriaceae</taxon>
        <taxon>Shigella</taxon>
    </lineage>
</organism>
<accession>B2TXT9</accession>
<reference key="1">
    <citation type="submission" date="2008-05" db="EMBL/GenBank/DDBJ databases">
        <title>Complete sequence of Shigella boydii serotype 18 strain BS512.</title>
        <authorList>
            <person name="Rasko D.A."/>
            <person name="Rosovitz M."/>
            <person name="Maurelli A.T."/>
            <person name="Myers G."/>
            <person name="Seshadri R."/>
            <person name="Cer R."/>
            <person name="Jiang L."/>
            <person name="Ravel J."/>
            <person name="Sebastian Y."/>
        </authorList>
    </citation>
    <scope>NUCLEOTIDE SEQUENCE [LARGE SCALE GENOMIC DNA]</scope>
    <source>
        <strain>CDC 3083-94 / BS512</strain>
    </source>
</reference>